<proteinExistence type="inferred from homology"/>
<sequence>MAIRKFKPYTPGTRQRVVTDFSEITGSKPERSLIVSKHRNKGRNNRGVITCRHRGGGHKRQYRLVDFRRDKRNINAKVAAIHYDPHRNARLALLFYEDGEKRYIIAPAGIKVGQNVISGDSVPIEDGNAMPLSVMPLGSSVHCVELYAGRGAQMVRSAGASAQLMAKEGDYVALKLPSTEVRLVRKECYATLGEVGNAEIRNTSLGKAGRTRWLGRRPQVRGSVMNPCDHPHGGGEGKAPIGRAGPVTPWGKAALGLKTRKKNKPSNNLVVRRRRRISKRSRGGRDS</sequence>
<dbReference type="EMBL" id="CP000552">
    <property type="protein sequence ID" value="ABM72944.1"/>
    <property type="molecule type" value="Genomic_DNA"/>
</dbReference>
<dbReference type="RefSeq" id="WP_011821034.1">
    <property type="nucleotide sequence ID" value="NC_008817.1"/>
</dbReference>
<dbReference type="SMR" id="A2BYT3"/>
<dbReference type="STRING" id="167542.P9515_17371"/>
<dbReference type="GeneID" id="60200718"/>
<dbReference type="KEGG" id="pmc:P9515_17371"/>
<dbReference type="eggNOG" id="COG0090">
    <property type="taxonomic scope" value="Bacteria"/>
</dbReference>
<dbReference type="HOGENOM" id="CLU_036235_2_1_3"/>
<dbReference type="OrthoDB" id="9778722at2"/>
<dbReference type="Proteomes" id="UP000001589">
    <property type="component" value="Chromosome"/>
</dbReference>
<dbReference type="GO" id="GO:0015934">
    <property type="term" value="C:large ribosomal subunit"/>
    <property type="evidence" value="ECO:0007669"/>
    <property type="project" value="InterPro"/>
</dbReference>
<dbReference type="GO" id="GO:0019843">
    <property type="term" value="F:rRNA binding"/>
    <property type="evidence" value="ECO:0007669"/>
    <property type="project" value="UniProtKB-UniRule"/>
</dbReference>
<dbReference type="GO" id="GO:0003735">
    <property type="term" value="F:structural constituent of ribosome"/>
    <property type="evidence" value="ECO:0007669"/>
    <property type="project" value="InterPro"/>
</dbReference>
<dbReference type="GO" id="GO:0016740">
    <property type="term" value="F:transferase activity"/>
    <property type="evidence" value="ECO:0007669"/>
    <property type="project" value="InterPro"/>
</dbReference>
<dbReference type="GO" id="GO:0006412">
    <property type="term" value="P:translation"/>
    <property type="evidence" value="ECO:0007669"/>
    <property type="project" value="UniProtKB-UniRule"/>
</dbReference>
<dbReference type="FunFam" id="2.30.30.30:FF:000001">
    <property type="entry name" value="50S ribosomal protein L2"/>
    <property type="match status" value="1"/>
</dbReference>
<dbReference type="FunFam" id="2.40.50.140:FF:000003">
    <property type="entry name" value="50S ribosomal protein L2"/>
    <property type="match status" value="1"/>
</dbReference>
<dbReference type="FunFam" id="4.10.950.10:FF:000001">
    <property type="entry name" value="50S ribosomal protein L2"/>
    <property type="match status" value="1"/>
</dbReference>
<dbReference type="Gene3D" id="2.30.30.30">
    <property type="match status" value="1"/>
</dbReference>
<dbReference type="Gene3D" id="2.40.50.140">
    <property type="entry name" value="Nucleic acid-binding proteins"/>
    <property type="match status" value="1"/>
</dbReference>
<dbReference type="Gene3D" id="4.10.950.10">
    <property type="entry name" value="Ribosomal protein L2, domain 3"/>
    <property type="match status" value="1"/>
</dbReference>
<dbReference type="HAMAP" id="MF_01320_B">
    <property type="entry name" value="Ribosomal_uL2_B"/>
    <property type="match status" value="1"/>
</dbReference>
<dbReference type="InterPro" id="IPR012340">
    <property type="entry name" value="NA-bd_OB-fold"/>
</dbReference>
<dbReference type="InterPro" id="IPR014722">
    <property type="entry name" value="Rib_uL2_dom2"/>
</dbReference>
<dbReference type="InterPro" id="IPR002171">
    <property type="entry name" value="Ribosomal_uL2"/>
</dbReference>
<dbReference type="InterPro" id="IPR005880">
    <property type="entry name" value="Ribosomal_uL2_bac/org-type"/>
</dbReference>
<dbReference type="InterPro" id="IPR022669">
    <property type="entry name" value="Ribosomal_uL2_C"/>
</dbReference>
<dbReference type="InterPro" id="IPR022671">
    <property type="entry name" value="Ribosomal_uL2_CS"/>
</dbReference>
<dbReference type="InterPro" id="IPR014726">
    <property type="entry name" value="Ribosomal_uL2_dom3"/>
</dbReference>
<dbReference type="InterPro" id="IPR022666">
    <property type="entry name" value="Ribosomal_uL2_RNA-bd_dom"/>
</dbReference>
<dbReference type="InterPro" id="IPR008991">
    <property type="entry name" value="Translation_prot_SH3-like_sf"/>
</dbReference>
<dbReference type="NCBIfam" id="TIGR01171">
    <property type="entry name" value="rplB_bact"/>
    <property type="match status" value="1"/>
</dbReference>
<dbReference type="PANTHER" id="PTHR13691:SF5">
    <property type="entry name" value="LARGE RIBOSOMAL SUBUNIT PROTEIN UL2M"/>
    <property type="match status" value="1"/>
</dbReference>
<dbReference type="PANTHER" id="PTHR13691">
    <property type="entry name" value="RIBOSOMAL PROTEIN L2"/>
    <property type="match status" value="1"/>
</dbReference>
<dbReference type="Pfam" id="PF00181">
    <property type="entry name" value="Ribosomal_L2"/>
    <property type="match status" value="1"/>
</dbReference>
<dbReference type="Pfam" id="PF03947">
    <property type="entry name" value="Ribosomal_L2_C"/>
    <property type="match status" value="1"/>
</dbReference>
<dbReference type="PIRSF" id="PIRSF002158">
    <property type="entry name" value="Ribosomal_L2"/>
    <property type="match status" value="1"/>
</dbReference>
<dbReference type="SMART" id="SM01383">
    <property type="entry name" value="Ribosomal_L2"/>
    <property type="match status" value="1"/>
</dbReference>
<dbReference type="SMART" id="SM01382">
    <property type="entry name" value="Ribosomal_L2_C"/>
    <property type="match status" value="1"/>
</dbReference>
<dbReference type="SUPFAM" id="SSF50249">
    <property type="entry name" value="Nucleic acid-binding proteins"/>
    <property type="match status" value="1"/>
</dbReference>
<dbReference type="SUPFAM" id="SSF50104">
    <property type="entry name" value="Translation proteins SH3-like domain"/>
    <property type="match status" value="1"/>
</dbReference>
<dbReference type="PROSITE" id="PS00467">
    <property type="entry name" value="RIBOSOMAL_L2"/>
    <property type="match status" value="1"/>
</dbReference>
<feature type="chain" id="PRO_0000309984" description="Large ribosomal subunit protein uL2">
    <location>
        <begin position="1"/>
        <end position="287"/>
    </location>
</feature>
<feature type="region of interest" description="Disordered" evidence="2">
    <location>
        <begin position="220"/>
        <end position="287"/>
    </location>
</feature>
<feature type="compositionally biased region" description="Basic residues" evidence="2">
    <location>
        <begin position="271"/>
        <end position="287"/>
    </location>
</feature>
<name>RL2_PROM5</name>
<comment type="function">
    <text evidence="1">One of the primary rRNA binding proteins. Required for association of the 30S and 50S subunits to form the 70S ribosome, for tRNA binding and peptide bond formation. It has been suggested to have peptidyltransferase activity; this is somewhat controversial. Makes several contacts with the 16S rRNA in the 70S ribosome.</text>
</comment>
<comment type="subunit">
    <text evidence="1">Part of the 50S ribosomal subunit. Forms a bridge to the 30S subunit in the 70S ribosome.</text>
</comment>
<comment type="similarity">
    <text evidence="1">Belongs to the universal ribosomal protein uL2 family.</text>
</comment>
<evidence type="ECO:0000255" key="1">
    <source>
        <dbReference type="HAMAP-Rule" id="MF_01320"/>
    </source>
</evidence>
<evidence type="ECO:0000256" key="2">
    <source>
        <dbReference type="SAM" id="MobiDB-lite"/>
    </source>
</evidence>
<evidence type="ECO:0000305" key="3"/>
<reference key="1">
    <citation type="journal article" date="2007" name="PLoS Genet.">
        <title>Patterns and implications of gene gain and loss in the evolution of Prochlorococcus.</title>
        <authorList>
            <person name="Kettler G.C."/>
            <person name="Martiny A.C."/>
            <person name="Huang K."/>
            <person name="Zucker J."/>
            <person name="Coleman M.L."/>
            <person name="Rodrigue S."/>
            <person name="Chen F."/>
            <person name="Lapidus A."/>
            <person name="Ferriera S."/>
            <person name="Johnson J."/>
            <person name="Steglich C."/>
            <person name="Church G.M."/>
            <person name="Richardson P."/>
            <person name="Chisholm S.W."/>
        </authorList>
    </citation>
    <scope>NUCLEOTIDE SEQUENCE [LARGE SCALE GENOMIC DNA]</scope>
    <source>
        <strain>MIT 9515</strain>
    </source>
</reference>
<gene>
    <name evidence="1" type="primary">rplB</name>
    <name evidence="1" type="synonym">rpl2</name>
    <name type="ordered locus">P9515_17371</name>
</gene>
<keyword id="KW-0687">Ribonucleoprotein</keyword>
<keyword id="KW-0689">Ribosomal protein</keyword>
<keyword id="KW-0694">RNA-binding</keyword>
<keyword id="KW-0699">rRNA-binding</keyword>
<organism>
    <name type="scientific">Prochlorococcus marinus (strain MIT 9515)</name>
    <dbReference type="NCBI Taxonomy" id="167542"/>
    <lineage>
        <taxon>Bacteria</taxon>
        <taxon>Bacillati</taxon>
        <taxon>Cyanobacteriota</taxon>
        <taxon>Cyanophyceae</taxon>
        <taxon>Synechococcales</taxon>
        <taxon>Prochlorococcaceae</taxon>
        <taxon>Prochlorococcus</taxon>
    </lineage>
</organism>
<accession>A2BYT3</accession>
<protein>
    <recommendedName>
        <fullName evidence="1">Large ribosomal subunit protein uL2</fullName>
    </recommendedName>
    <alternativeName>
        <fullName evidence="3">50S ribosomal protein L2</fullName>
    </alternativeName>
</protein>